<keyword id="KW-0687">Ribonucleoprotein</keyword>
<keyword id="KW-0689">Ribosomal protein</keyword>
<keyword id="KW-0694">RNA-binding</keyword>
<keyword id="KW-0699">rRNA-binding</keyword>
<feature type="chain" id="PRO_1000005219" description="Small ribosomal subunit protein bS6">
    <location>
        <begin position="1"/>
        <end position="136"/>
    </location>
</feature>
<feature type="region of interest" description="Disordered" evidence="2">
    <location>
        <begin position="97"/>
        <end position="136"/>
    </location>
</feature>
<feature type="compositionally biased region" description="Basic and acidic residues" evidence="2">
    <location>
        <begin position="97"/>
        <end position="128"/>
    </location>
</feature>
<accession>A1US56</accession>
<dbReference type="EMBL" id="CP000524">
    <property type="protein sequence ID" value="ABM44636.1"/>
    <property type="molecule type" value="Genomic_DNA"/>
</dbReference>
<dbReference type="RefSeq" id="WP_005766585.1">
    <property type="nucleotide sequence ID" value="NC_008783.1"/>
</dbReference>
<dbReference type="SMR" id="A1US56"/>
<dbReference type="STRING" id="360095.BARBAKC583_0494"/>
<dbReference type="GeneID" id="4684511"/>
<dbReference type="KEGG" id="bbk:BARBAKC583_0494"/>
<dbReference type="PATRIC" id="fig|360095.6.peg.477"/>
<dbReference type="eggNOG" id="COG0360">
    <property type="taxonomic scope" value="Bacteria"/>
</dbReference>
<dbReference type="HOGENOM" id="CLU_113441_2_0_5"/>
<dbReference type="OrthoDB" id="9812702at2"/>
<dbReference type="Proteomes" id="UP000000643">
    <property type="component" value="Chromosome"/>
</dbReference>
<dbReference type="GO" id="GO:0022627">
    <property type="term" value="C:cytosolic small ribosomal subunit"/>
    <property type="evidence" value="ECO:0007669"/>
    <property type="project" value="TreeGrafter"/>
</dbReference>
<dbReference type="GO" id="GO:0070181">
    <property type="term" value="F:small ribosomal subunit rRNA binding"/>
    <property type="evidence" value="ECO:0007669"/>
    <property type="project" value="TreeGrafter"/>
</dbReference>
<dbReference type="GO" id="GO:0003735">
    <property type="term" value="F:structural constituent of ribosome"/>
    <property type="evidence" value="ECO:0007669"/>
    <property type="project" value="InterPro"/>
</dbReference>
<dbReference type="GO" id="GO:0006412">
    <property type="term" value="P:translation"/>
    <property type="evidence" value="ECO:0007669"/>
    <property type="project" value="UniProtKB-UniRule"/>
</dbReference>
<dbReference type="CDD" id="cd00473">
    <property type="entry name" value="bS6"/>
    <property type="match status" value="1"/>
</dbReference>
<dbReference type="Gene3D" id="3.30.70.60">
    <property type="match status" value="1"/>
</dbReference>
<dbReference type="HAMAP" id="MF_00360">
    <property type="entry name" value="Ribosomal_bS6"/>
    <property type="match status" value="1"/>
</dbReference>
<dbReference type="InterPro" id="IPR000529">
    <property type="entry name" value="Ribosomal_bS6"/>
</dbReference>
<dbReference type="InterPro" id="IPR035980">
    <property type="entry name" value="Ribosomal_bS6_sf"/>
</dbReference>
<dbReference type="InterPro" id="IPR020814">
    <property type="entry name" value="Ribosomal_S6_plastid/chlpt"/>
</dbReference>
<dbReference type="InterPro" id="IPR014717">
    <property type="entry name" value="Transl_elong_EF1B/ribsomal_bS6"/>
</dbReference>
<dbReference type="NCBIfam" id="TIGR00166">
    <property type="entry name" value="S6"/>
    <property type="match status" value="1"/>
</dbReference>
<dbReference type="PANTHER" id="PTHR21011">
    <property type="entry name" value="MITOCHONDRIAL 28S RIBOSOMAL PROTEIN S6"/>
    <property type="match status" value="1"/>
</dbReference>
<dbReference type="PANTHER" id="PTHR21011:SF1">
    <property type="entry name" value="SMALL RIBOSOMAL SUBUNIT PROTEIN BS6M"/>
    <property type="match status" value="1"/>
</dbReference>
<dbReference type="Pfam" id="PF01250">
    <property type="entry name" value="Ribosomal_S6"/>
    <property type="match status" value="1"/>
</dbReference>
<dbReference type="SUPFAM" id="SSF54995">
    <property type="entry name" value="Ribosomal protein S6"/>
    <property type="match status" value="1"/>
</dbReference>
<proteinExistence type="inferred from homology"/>
<gene>
    <name evidence="1" type="primary">rpsF</name>
    <name type="ordered locus">BARBAKC583_0494</name>
</gene>
<protein>
    <recommendedName>
        <fullName evidence="1">Small ribosomal subunit protein bS6</fullName>
    </recommendedName>
    <alternativeName>
        <fullName evidence="3">30S ribosomal protein S6</fullName>
    </alternativeName>
</protein>
<comment type="function">
    <text evidence="1">Binds together with bS18 to 16S ribosomal RNA.</text>
</comment>
<comment type="similarity">
    <text evidence="1">Belongs to the bacterial ribosomal protein bS6 family.</text>
</comment>
<organism>
    <name type="scientific">Bartonella bacilliformis (strain ATCC 35685 / KC583 / Herrer 020/F12,63)</name>
    <dbReference type="NCBI Taxonomy" id="360095"/>
    <lineage>
        <taxon>Bacteria</taxon>
        <taxon>Pseudomonadati</taxon>
        <taxon>Pseudomonadota</taxon>
        <taxon>Alphaproteobacteria</taxon>
        <taxon>Hyphomicrobiales</taxon>
        <taxon>Bartonellaceae</taxon>
        <taxon>Bartonella</taxon>
    </lineage>
</organism>
<evidence type="ECO:0000255" key="1">
    <source>
        <dbReference type="HAMAP-Rule" id="MF_00360"/>
    </source>
</evidence>
<evidence type="ECO:0000256" key="2">
    <source>
        <dbReference type="SAM" id="MobiDB-lite"/>
    </source>
</evidence>
<evidence type="ECO:0000305" key="3"/>
<name>RS6_BARBK</name>
<reference key="1">
    <citation type="submission" date="2006-12" db="EMBL/GenBank/DDBJ databases">
        <authorList>
            <person name="Hendrix L."/>
            <person name="Mohamoud Y."/>
            <person name="Radune D."/>
            <person name="Shvartsbeyn A."/>
            <person name="Daugherty S."/>
            <person name="Dodson R."/>
            <person name="Durkin A.S."/>
            <person name="Harkins D."/>
            <person name="Huot H."/>
            <person name="Kothari S.P."/>
            <person name="Madupu R."/>
            <person name="Li J."/>
            <person name="Nelson W.C."/>
            <person name="Shrivastava S."/>
            <person name="Giglio M.G."/>
            <person name="Haft D."/>
            <person name="Selengut J."/>
            <person name="Fraser-Ligget C."/>
            <person name="Seshadri R."/>
        </authorList>
    </citation>
    <scope>NUCLEOTIDE SEQUENCE [LARGE SCALE GENOMIC DNA]</scope>
    <source>
        <strain>ATCC 35685 / KC583 / Herrer 020/F12,63</strain>
    </source>
</reference>
<sequence>MALYEHVFLARQDIAPQQVDELLKTYKNVIESHGGKVERTENWGLRSLAYRIRKNRKAHYVLINIDAPAAAIAEMERQMRINEDILRYITIRVEKHEKEQSAMLSRPDRDDFPGKDEERPRPSRRQYEDVVEGGVE</sequence>